<keyword id="KW-0665">Pyrimidine biosynthesis</keyword>
<keyword id="KW-1185">Reference proteome</keyword>
<keyword id="KW-0808">Transferase</keyword>
<protein>
    <recommendedName>
        <fullName evidence="1">Aspartate carbamoyltransferase catalytic subunit</fullName>
        <ecNumber evidence="1">2.1.3.2</ecNumber>
    </recommendedName>
    <alternativeName>
        <fullName evidence="1">Aspartate transcarbamylase</fullName>
        <shortName evidence="1">ATCase</shortName>
    </alternativeName>
</protein>
<accession>A3CNI7</accession>
<proteinExistence type="inferred from homology"/>
<feature type="chain" id="PRO_0000321168" description="Aspartate carbamoyltransferase catalytic subunit">
    <location>
        <begin position="1"/>
        <end position="305"/>
    </location>
</feature>
<feature type="binding site" evidence="1">
    <location>
        <position position="56"/>
    </location>
    <ligand>
        <name>carbamoyl phosphate</name>
        <dbReference type="ChEBI" id="CHEBI:58228"/>
    </ligand>
</feature>
<feature type="binding site" evidence="1">
    <location>
        <position position="57"/>
    </location>
    <ligand>
        <name>carbamoyl phosphate</name>
        <dbReference type="ChEBI" id="CHEBI:58228"/>
    </ligand>
</feature>
<feature type="binding site" evidence="1">
    <location>
        <position position="84"/>
    </location>
    <ligand>
        <name>L-aspartate</name>
        <dbReference type="ChEBI" id="CHEBI:29991"/>
    </ligand>
</feature>
<feature type="binding site" evidence="1">
    <location>
        <position position="106"/>
    </location>
    <ligand>
        <name>carbamoyl phosphate</name>
        <dbReference type="ChEBI" id="CHEBI:58228"/>
    </ligand>
</feature>
<feature type="binding site" evidence="1">
    <location>
        <position position="136"/>
    </location>
    <ligand>
        <name>carbamoyl phosphate</name>
        <dbReference type="ChEBI" id="CHEBI:58228"/>
    </ligand>
</feature>
<feature type="binding site" evidence="1">
    <location>
        <position position="139"/>
    </location>
    <ligand>
        <name>carbamoyl phosphate</name>
        <dbReference type="ChEBI" id="CHEBI:58228"/>
    </ligand>
</feature>
<feature type="binding site" evidence="1">
    <location>
        <position position="169"/>
    </location>
    <ligand>
        <name>L-aspartate</name>
        <dbReference type="ChEBI" id="CHEBI:29991"/>
    </ligand>
</feature>
<feature type="binding site" evidence="1">
    <location>
        <position position="221"/>
    </location>
    <ligand>
        <name>L-aspartate</name>
        <dbReference type="ChEBI" id="CHEBI:29991"/>
    </ligand>
</feature>
<feature type="binding site" evidence="1">
    <location>
        <position position="262"/>
    </location>
    <ligand>
        <name>carbamoyl phosphate</name>
        <dbReference type="ChEBI" id="CHEBI:58228"/>
    </ligand>
</feature>
<feature type="binding site" evidence="1">
    <location>
        <position position="263"/>
    </location>
    <ligand>
        <name>carbamoyl phosphate</name>
        <dbReference type="ChEBI" id="CHEBI:58228"/>
    </ligand>
</feature>
<reference key="1">
    <citation type="journal article" date="2007" name="J. Bacteriol.">
        <title>Genome of the opportunistic pathogen Streptococcus sanguinis.</title>
        <authorList>
            <person name="Xu P."/>
            <person name="Alves J.M."/>
            <person name="Kitten T."/>
            <person name="Brown A."/>
            <person name="Chen Z."/>
            <person name="Ozaki L.S."/>
            <person name="Manque P."/>
            <person name="Ge X."/>
            <person name="Serrano M.G."/>
            <person name="Puiu D."/>
            <person name="Hendricks S."/>
            <person name="Wang Y."/>
            <person name="Chaplin M.D."/>
            <person name="Akan D."/>
            <person name="Paik S."/>
            <person name="Peterson D.L."/>
            <person name="Macrina F.L."/>
            <person name="Buck G.A."/>
        </authorList>
    </citation>
    <scope>NUCLEOTIDE SEQUENCE [LARGE SCALE GENOMIC DNA]</scope>
    <source>
        <strain>SK36</strain>
    </source>
</reference>
<gene>
    <name evidence="1" type="primary">pyrB</name>
    <name type="ordered locus">SSA_1343</name>
</gene>
<name>PYRB_STRSV</name>
<organism>
    <name type="scientific">Streptococcus sanguinis (strain SK36)</name>
    <dbReference type="NCBI Taxonomy" id="388919"/>
    <lineage>
        <taxon>Bacteria</taxon>
        <taxon>Bacillati</taxon>
        <taxon>Bacillota</taxon>
        <taxon>Bacilli</taxon>
        <taxon>Lactobacillales</taxon>
        <taxon>Streptococcaceae</taxon>
        <taxon>Streptococcus</taxon>
    </lineage>
</organism>
<sequence length="305" mass="34672">MSSNQIALKNLVSMETLSNEEVMALIKRGIEFKNGAKVHYDEQHIVSNLFFEPSTRTHKAFEVAELKLGCDLLDFDVKTSSVNKGETLYDTILTMSALGVDVCVIRHPEVDYYKELVESPTITTSIVNGGDGSGQHPSQSLLDLMTIYQEFGRFEGLKVAIAGDLDHSRVAKSNMQILKRLGAELYFAGPEEWRSQEFADYGKFVTIDEVIEEVDVMMFLRVQHERHDYESIFSKENYHRLHGLTQERYDRMKDTAILMHPAPVNRDVEIADHLVEAPKSRIVEQMTNGVFVRMAIIEAVLKGRQ</sequence>
<evidence type="ECO:0000255" key="1">
    <source>
        <dbReference type="HAMAP-Rule" id="MF_00001"/>
    </source>
</evidence>
<dbReference type="EC" id="2.1.3.2" evidence="1"/>
<dbReference type="EMBL" id="CP000387">
    <property type="protein sequence ID" value="ABN44742.1"/>
    <property type="molecule type" value="Genomic_DNA"/>
</dbReference>
<dbReference type="RefSeq" id="WP_002895276.1">
    <property type="nucleotide sequence ID" value="NC_009009.1"/>
</dbReference>
<dbReference type="RefSeq" id="YP_001035292.1">
    <property type="nucleotide sequence ID" value="NC_009009.1"/>
</dbReference>
<dbReference type="SMR" id="A3CNI7"/>
<dbReference type="STRING" id="388919.SSA_1343"/>
<dbReference type="KEGG" id="ssa:SSA_1343"/>
<dbReference type="PATRIC" id="fig|388919.9.peg.1277"/>
<dbReference type="eggNOG" id="COG0540">
    <property type="taxonomic scope" value="Bacteria"/>
</dbReference>
<dbReference type="HOGENOM" id="CLU_043846_2_1_9"/>
<dbReference type="OrthoDB" id="9774690at2"/>
<dbReference type="UniPathway" id="UPA00070">
    <property type="reaction ID" value="UER00116"/>
</dbReference>
<dbReference type="Proteomes" id="UP000002148">
    <property type="component" value="Chromosome"/>
</dbReference>
<dbReference type="GO" id="GO:0005829">
    <property type="term" value="C:cytosol"/>
    <property type="evidence" value="ECO:0007669"/>
    <property type="project" value="TreeGrafter"/>
</dbReference>
<dbReference type="GO" id="GO:0016597">
    <property type="term" value="F:amino acid binding"/>
    <property type="evidence" value="ECO:0007669"/>
    <property type="project" value="InterPro"/>
</dbReference>
<dbReference type="GO" id="GO:0004070">
    <property type="term" value="F:aspartate carbamoyltransferase activity"/>
    <property type="evidence" value="ECO:0007669"/>
    <property type="project" value="UniProtKB-UniRule"/>
</dbReference>
<dbReference type="GO" id="GO:0006207">
    <property type="term" value="P:'de novo' pyrimidine nucleobase biosynthetic process"/>
    <property type="evidence" value="ECO:0007669"/>
    <property type="project" value="InterPro"/>
</dbReference>
<dbReference type="GO" id="GO:0044205">
    <property type="term" value="P:'de novo' UMP biosynthetic process"/>
    <property type="evidence" value="ECO:0007669"/>
    <property type="project" value="UniProtKB-UniRule"/>
</dbReference>
<dbReference type="GO" id="GO:0006520">
    <property type="term" value="P:amino acid metabolic process"/>
    <property type="evidence" value="ECO:0007669"/>
    <property type="project" value="InterPro"/>
</dbReference>
<dbReference type="FunFam" id="3.40.50.1370:FF:000011">
    <property type="entry name" value="Aspartate carbamoyltransferase"/>
    <property type="match status" value="1"/>
</dbReference>
<dbReference type="Gene3D" id="3.40.50.1370">
    <property type="entry name" value="Aspartate/ornithine carbamoyltransferase"/>
    <property type="match status" value="2"/>
</dbReference>
<dbReference type="HAMAP" id="MF_00001">
    <property type="entry name" value="Asp_carb_tr"/>
    <property type="match status" value="1"/>
</dbReference>
<dbReference type="InterPro" id="IPR006132">
    <property type="entry name" value="Asp/Orn_carbamoyltranf_P-bd"/>
</dbReference>
<dbReference type="InterPro" id="IPR006130">
    <property type="entry name" value="Asp/Orn_carbamoylTrfase"/>
</dbReference>
<dbReference type="InterPro" id="IPR036901">
    <property type="entry name" value="Asp/Orn_carbamoylTrfase_sf"/>
</dbReference>
<dbReference type="InterPro" id="IPR002082">
    <property type="entry name" value="Asp_carbamoyltransf"/>
</dbReference>
<dbReference type="InterPro" id="IPR006131">
    <property type="entry name" value="Asp_carbamoyltransf_Asp/Orn-bd"/>
</dbReference>
<dbReference type="NCBIfam" id="TIGR00670">
    <property type="entry name" value="asp_carb_tr"/>
    <property type="match status" value="1"/>
</dbReference>
<dbReference type="NCBIfam" id="NF002032">
    <property type="entry name" value="PRK00856.1"/>
    <property type="match status" value="1"/>
</dbReference>
<dbReference type="PANTHER" id="PTHR45753:SF6">
    <property type="entry name" value="ASPARTATE CARBAMOYLTRANSFERASE"/>
    <property type="match status" value="1"/>
</dbReference>
<dbReference type="PANTHER" id="PTHR45753">
    <property type="entry name" value="ORNITHINE CARBAMOYLTRANSFERASE, MITOCHONDRIAL"/>
    <property type="match status" value="1"/>
</dbReference>
<dbReference type="Pfam" id="PF00185">
    <property type="entry name" value="OTCace"/>
    <property type="match status" value="1"/>
</dbReference>
<dbReference type="Pfam" id="PF02729">
    <property type="entry name" value="OTCace_N"/>
    <property type="match status" value="1"/>
</dbReference>
<dbReference type="PRINTS" id="PR00100">
    <property type="entry name" value="AOTCASE"/>
</dbReference>
<dbReference type="PRINTS" id="PR00101">
    <property type="entry name" value="ATCASE"/>
</dbReference>
<dbReference type="SUPFAM" id="SSF53671">
    <property type="entry name" value="Aspartate/ornithine carbamoyltransferase"/>
    <property type="match status" value="1"/>
</dbReference>
<dbReference type="PROSITE" id="PS00097">
    <property type="entry name" value="CARBAMOYLTRANSFERASE"/>
    <property type="match status" value="1"/>
</dbReference>
<comment type="function">
    <text evidence="1">Catalyzes the condensation of carbamoyl phosphate and aspartate to form carbamoyl aspartate and inorganic phosphate, the committed step in the de novo pyrimidine nucleotide biosynthesis pathway.</text>
</comment>
<comment type="catalytic activity">
    <reaction evidence="1">
        <text>carbamoyl phosphate + L-aspartate = N-carbamoyl-L-aspartate + phosphate + H(+)</text>
        <dbReference type="Rhea" id="RHEA:20013"/>
        <dbReference type="ChEBI" id="CHEBI:15378"/>
        <dbReference type="ChEBI" id="CHEBI:29991"/>
        <dbReference type="ChEBI" id="CHEBI:32814"/>
        <dbReference type="ChEBI" id="CHEBI:43474"/>
        <dbReference type="ChEBI" id="CHEBI:58228"/>
        <dbReference type="EC" id="2.1.3.2"/>
    </reaction>
</comment>
<comment type="pathway">
    <text evidence="1">Pyrimidine metabolism; UMP biosynthesis via de novo pathway; (S)-dihydroorotate from bicarbonate: step 2/3.</text>
</comment>
<comment type="subunit">
    <text evidence="1">Heterododecamer (2C3:3R2) of six catalytic PyrB chains organized as two trimers (C3), and six regulatory PyrI chains organized as three dimers (R2).</text>
</comment>
<comment type="similarity">
    <text evidence="1">Belongs to the aspartate/ornithine carbamoyltransferase superfamily. ATCase family.</text>
</comment>